<organism>
    <name type="scientific">Human immunodeficiency virus type 2 subtype A (isolate D194)</name>
    <name type="common">HIV-2</name>
    <dbReference type="NCBI Taxonomy" id="11713"/>
    <lineage>
        <taxon>Viruses</taxon>
        <taxon>Riboviria</taxon>
        <taxon>Pararnavirae</taxon>
        <taxon>Artverviricota</taxon>
        <taxon>Revtraviricetes</taxon>
        <taxon>Ortervirales</taxon>
        <taxon>Retroviridae</taxon>
        <taxon>Orthoretrovirinae</taxon>
        <taxon>Lentivirus</taxon>
        <taxon>Human immunodeficiency virus 2</taxon>
    </lineage>
</organism>
<organismHost>
    <name type="scientific">Homo sapiens</name>
    <name type="common">Human</name>
    <dbReference type="NCBI Taxonomy" id="9606"/>
</organismHost>
<reference key="1">
    <citation type="journal article" date="1989" name="Proc. Natl. Acad. Sci. U.S.A.">
        <title>Molecular cloning of two west African human immunodeficiency virus type 2 isolates that replicate well in macrophages: a Gambian isolate, from a patient with neurologic acquired immunodeficiency syndrome, and a highly divergent Ghanian isolate.</title>
        <authorList>
            <person name="Kuehnel H."/>
            <person name="von Briesen H."/>
            <person name="Dietrich U."/>
            <person name="Adamski M."/>
            <person name="Mix D."/>
            <person name="Biesert L."/>
            <person name="Kreutz R."/>
            <person name="Immelmann A."/>
            <person name="Henco K."/>
            <person name="Meichsner C."/>
            <person name="Andreesen R."/>
            <person name="Gelderblom H."/>
            <person name="Ruebsamen-Waigmann H."/>
        </authorList>
    </citation>
    <scope>NUCLEOTIDE SEQUENCE [GENOMIC DNA]</scope>
</reference>
<reference key="2">
    <citation type="journal article" date="1990" name="Nucleic Acids Res.">
        <title>Nucleotide sequence of HIV-2D194, an isolate from a Gambian case of 'neuro-AIDS', which showed excellent growth in macrophages.</title>
        <authorList>
            <person name="Kuehnel H."/>
            <person name="Kreutz R."/>
            <person name="Ruebsamen-Waigmann H."/>
        </authorList>
    </citation>
    <scope>NUCLEOTIDE SEQUENCE [GENOMIC DNA]</scope>
</reference>
<reference key="3">
    <citation type="journal article" date="1996" name="Curr. Top. Microbiol. Immunol.">
        <title>Proteolytic processing and particle maturation.</title>
        <authorList>
            <person name="Vogt V.M."/>
        </authorList>
    </citation>
    <scope>REVIEW</scope>
</reference>
<reference key="4">
    <citation type="journal article" date="1999" name="J. Mol. Biol.">
        <title>Structural biology of HIV.</title>
        <authorList>
            <person name="Turner B.G."/>
            <person name="Summers M.F."/>
        </authorList>
    </citation>
    <scope>REVIEW</scope>
</reference>
<reference key="5">
    <citation type="journal article" date="2001" name="Annu. Rev. Genet.">
        <title>Mechanisms of retroviral recombination.</title>
        <authorList>
            <person name="Negroni M."/>
            <person name="Buc H."/>
        </authorList>
    </citation>
    <scope>REVIEW</scope>
</reference>
<reference key="6">
    <citation type="journal article" date="2002" name="Genome Biol.">
        <title>Retroviral proteases.</title>
        <authorList>
            <person name="Dunn B.M."/>
            <person name="Goodenow M.M."/>
            <person name="Gustchina A."/>
            <person name="Wlodawer A."/>
        </authorList>
    </citation>
    <scope>REVIEW</scope>
</reference>
<keyword id="KW-0014">AIDS</keyword>
<keyword id="KW-0064">Aspartyl protease</keyword>
<keyword id="KW-0167">Capsid protein</keyword>
<keyword id="KW-0229">DNA integration</keyword>
<keyword id="KW-0233">DNA recombination</keyword>
<keyword id="KW-0238">DNA-binding</keyword>
<keyword id="KW-0239">DNA-directed DNA polymerase</keyword>
<keyword id="KW-0255">Endonuclease</keyword>
<keyword id="KW-1262">Eukaryotic host gene expression shutoff by virus</keyword>
<keyword id="KW-1193">Eukaryotic host translation shutoff by virus</keyword>
<keyword id="KW-1032">Host cell membrane</keyword>
<keyword id="KW-1035">Host cytoplasm</keyword>
<keyword id="KW-1039">Host endosome</keyword>
<keyword id="KW-1190">Host gene expression shutoff by virus</keyword>
<keyword id="KW-1043">Host membrane</keyword>
<keyword id="KW-1048">Host nucleus</keyword>
<keyword id="KW-0945">Host-virus interaction</keyword>
<keyword id="KW-0378">Hydrolase</keyword>
<keyword id="KW-0446">Lipid-binding</keyword>
<keyword id="KW-0449">Lipoprotein</keyword>
<keyword id="KW-0460">Magnesium</keyword>
<keyword id="KW-0472">Membrane</keyword>
<keyword id="KW-0479">Metal-binding</keyword>
<keyword id="KW-0511">Multifunctional enzyme</keyword>
<keyword id="KW-0519">Myristate</keyword>
<keyword id="KW-0540">Nuclease</keyword>
<keyword id="KW-0548">Nucleotidyltransferase</keyword>
<keyword id="KW-0645">Protease</keyword>
<keyword id="KW-0677">Repeat</keyword>
<keyword id="KW-0688">Ribosomal frameshifting</keyword>
<keyword id="KW-0694">RNA-binding</keyword>
<keyword id="KW-0695">RNA-directed DNA polymerase</keyword>
<keyword id="KW-0808">Transferase</keyword>
<keyword id="KW-1179">Viral genome integration</keyword>
<keyword id="KW-0543">Viral nucleoprotein</keyword>
<keyword id="KW-1163">Viral penetration into host nucleus</keyword>
<keyword id="KW-1188">Viral release from host cell</keyword>
<keyword id="KW-0946">Virion</keyword>
<keyword id="KW-0917">Virion maturation</keyword>
<keyword id="KW-1160">Virus entry into host cell</keyword>
<keyword id="KW-0862">Zinc</keyword>
<keyword id="KW-0863">Zinc-finger</keyword>
<sequence>MGARNSVLRGKKADELEKVRLRPNGKKRYRLKHVVWAANELDRFGLAESLLESKEGCQKILKVLEPLVPTGSENLKSLFNTVCVIWCLHAEEKVKDTEEAKKLAQRHLVAETGTAEKMPNISRPTAPPSGKGGNFPVQQAGGNYIHVPLSPRTLNAWVKLVEEKKFGAEVVPGFQALSEGCTPYDINQMLNCVGDHQAAMQIIREIINEEAADWDAQHPIPGPLPAGQLRDPRGSDIAGTTSTVDEQIQWMYRQPNPVPVGNIYRRWIQIGLQKCVRMYNPTNILDVKQGPKESFQSYVDRFYKSLRAEQTDPAVKNWMTQTLLIQNANPDCKLVLKGLGMNPTLEEMLTACQGVGGPSQKARLMAEALKEALTPAPIPFAAAQQRRAIRCWNCGKEGHSAKQCRAPRRQGCWKCGKSGHIMANCPERQAGFLDGPTGKAAPQLPRGPSSSGADTNSTPNRSSSGPVGEIYAAREKAERAEGETIQGGDGGLTAPRAGRDAPQRGDRGLATPQFSLWKRPVVTAFIEDQPVEVLLDTGADDSIVAGIELGDNYTPKIVGGIGGFINTKEYKNVEIKVLNKRVRATIMTGDTPINIFGRNILATLGMSLNLPVAKLDPIKVTLKPGKDGPRLKQWPLTKEKIEALKEICEKMEREGQLEEAPPTNPYNTPTFAIKKKDKNKWRMLIDFRELNRVTQDFTEIQLGIPHPAGLAKKKRITVLDVGDAYFSIPLHEDFRQYTAFTLPSVNNAEPEKRYVYKVLPQGWKGSPAIFQFMMRQILEPFRKANPDVILIQYMDDILIASDRTGLEHDKVVLQLKELLNGLGFSTPDEKFQKDPPFQWMGYELWPTKWKLQKIQLPQKEIWTVNDIQKLVGVLNWAAQIYPGIKTKHLCKLIRGKMTLTEEVQWTELAEAELEENKIILSQEQEGSYYQEEEELEATVIKSQDNQWAYKIHQGERVLKVGKYAKIKNTHTNGVRLLAQVVQKIGKEALVIWGRVPKFHLPVERDTWEQWWDNYWQVTWVPEWDFVSTPPLVRLTFNLVGDPIPGTETFYTDGSCNRQSKEGKAGYVTDRGRDRVRVLEQTSNQQAELEAFAMALADSGPKVNIIVDSQYVMGIVAGQPTESENRIVNQIIEDMIKKEAVYVAWVPAHKGIGGNQEVDHLVSQGIRQVLFLEKIEPAQEEHEKYHSNIKELTHKFGIPQLVARQIVNTCAQCQQKGEAIHGQVNAEIGVWQMDCTHLEGKIIIVAVHVASGFIEAEVIPQESGRQTALFLLKLASRWPITHLHTDNGPNFTSQEVKMVAWWIGIEQSFGVPYNPQSQGVVEAMNHHLKNQISRIREQANTIETIVLMAVHCMNFKRRGGIGDMTPAERLINMITTEQEIQFLQRKNSNFKKFQVYYREGRDQLWKGPGELLWKGDGAVIVKVGADIKVVPRRKAKIIRDYGGRQELDSSSHLEGAREDGEVA</sequence>
<protein>
    <recommendedName>
        <fullName>Gag-Pol polyprotein</fullName>
    </recommendedName>
    <alternativeName>
        <fullName>Pr160Gag-Pol</fullName>
    </alternativeName>
    <component>
        <recommendedName>
            <fullName>Matrix protein p17</fullName>
            <shortName>MA</shortName>
        </recommendedName>
    </component>
    <component>
        <recommendedName>
            <fullName>Capsid protein p24</fullName>
            <shortName>CA</shortName>
        </recommendedName>
    </component>
    <component>
        <recommendedName>
            <fullName evidence="8">Spacer peptide 1</fullName>
            <shortName>SP1</shortName>
        </recommendedName>
        <alternativeName>
            <fullName>p2</fullName>
        </alternativeName>
    </component>
    <component>
        <recommendedName>
            <fullName>Nucleocapsid protein p7</fullName>
            <shortName>NC</shortName>
        </recommendedName>
    </component>
    <component>
        <recommendedName>
            <fullName>Transframe peptide</fullName>
            <shortName>TF</shortName>
        </recommendedName>
    </component>
    <component>
        <recommendedName>
            <fullName>p6-pol</fullName>
            <shortName>p6*</shortName>
        </recommendedName>
    </component>
    <component>
        <recommendedName>
            <fullName>Protease</fullName>
            <ecNumber>3.4.23.47</ecNumber>
        </recommendedName>
        <alternativeName>
            <fullName>PR</fullName>
        </alternativeName>
        <alternativeName>
            <fullName>Retropepsin</fullName>
        </alternativeName>
    </component>
    <component>
        <recommendedName>
            <fullName>Reverse transcriptase/ribonuclease H</fullName>
            <ecNumber>2.7.7.49</ecNumber>
            <ecNumber>2.7.7.7</ecNumber>
            <ecNumber>3.1.26.13</ecNumber>
        </recommendedName>
        <alternativeName>
            <fullName>Exoribonuclease H</fullName>
            <ecNumber>3.1.13.2</ecNumber>
        </alternativeName>
        <alternativeName>
            <fullName>p66 RT</fullName>
        </alternativeName>
    </component>
    <component>
        <recommendedName>
            <fullName>p51 RT</fullName>
        </recommendedName>
    </component>
    <component>
        <recommendedName>
            <fullName>p15</fullName>
        </recommendedName>
    </component>
    <component>
        <recommendedName>
            <fullName>Integrase</fullName>
            <shortName>IN</shortName>
            <ecNumber evidence="5">2.7.7.-</ecNumber>
            <ecNumber evidence="5">3.1.-.-</ecNumber>
        </recommendedName>
    </component>
</protein>
<dbReference type="EC" id="3.4.23.47"/>
<dbReference type="EC" id="2.7.7.49"/>
<dbReference type="EC" id="2.7.7.7"/>
<dbReference type="EC" id="3.1.26.13"/>
<dbReference type="EC" id="3.1.13.2"/>
<dbReference type="EC" id="2.7.7.-" evidence="5"/>
<dbReference type="EC" id="3.1.-.-" evidence="5"/>
<dbReference type="EMBL" id="J04542">
    <property type="protein sequence ID" value="AAA76841.2"/>
    <property type="status" value="ALT_SEQ"/>
    <property type="molecule type" value="Genomic_DNA"/>
</dbReference>
<dbReference type="EMBL" id="X52223">
    <property type="status" value="NOT_ANNOTATED_CDS"/>
    <property type="molecule type" value="Genomic_DNA"/>
</dbReference>
<dbReference type="PIR" id="S12153">
    <property type="entry name" value="S12153"/>
</dbReference>
<dbReference type="SMR" id="P17757"/>
<dbReference type="MEROPS" id="A02.002"/>
<dbReference type="PRO" id="PR:P17757"/>
<dbReference type="Proteomes" id="UP000007422">
    <property type="component" value="Segment"/>
</dbReference>
<dbReference type="GO" id="GO:0043657">
    <property type="term" value="C:host cell"/>
    <property type="evidence" value="ECO:0007669"/>
    <property type="project" value="GOC"/>
</dbReference>
<dbReference type="GO" id="GO:0042025">
    <property type="term" value="C:host cell nucleus"/>
    <property type="evidence" value="ECO:0007669"/>
    <property type="project" value="UniProtKB-SubCell"/>
</dbReference>
<dbReference type="GO" id="GO:0020002">
    <property type="term" value="C:host cell plasma membrane"/>
    <property type="evidence" value="ECO:0007669"/>
    <property type="project" value="UniProtKB-SubCell"/>
</dbReference>
<dbReference type="GO" id="GO:0072494">
    <property type="term" value="C:host multivesicular body"/>
    <property type="evidence" value="ECO:0007669"/>
    <property type="project" value="UniProtKB-SubCell"/>
</dbReference>
<dbReference type="GO" id="GO:0016020">
    <property type="term" value="C:membrane"/>
    <property type="evidence" value="ECO:0007669"/>
    <property type="project" value="UniProtKB-KW"/>
</dbReference>
<dbReference type="GO" id="GO:0019013">
    <property type="term" value="C:viral nucleocapsid"/>
    <property type="evidence" value="ECO:0007669"/>
    <property type="project" value="UniProtKB-KW"/>
</dbReference>
<dbReference type="GO" id="GO:0055036">
    <property type="term" value="C:virion membrane"/>
    <property type="evidence" value="ECO:0007669"/>
    <property type="project" value="UniProtKB-SubCell"/>
</dbReference>
<dbReference type="GO" id="GO:0004190">
    <property type="term" value="F:aspartic-type endopeptidase activity"/>
    <property type="evidence" value="ECO:0007669"/>
    <property type="project" value="UniProtKB-KW"/>
</dbReference>
<dbReference type="GO" id="GO:0003677">
    <property type="term" value="F:DNA binding"/>
    <property type="evidence" value="ECO:0007669"/>
    <property type="project" value="UniProtKB-KW"/>
</dbReference>
<dbReference type="GO" id="GO:0003887">
    <property type="term" value="F:DNA-directed DNA polymerase activity"/>
    <property type="evidence" value="ECO:0007669"/>
    <property type="project" value="UniProtKB-KW"/>
</dbReference>
<dbReference type="GO" id="GO:0004533">
    <property type="term" value="F:exoribonuclease H activity"/>
    <property type="evidence" value="ECO:0007669"/>
    <property type="project" value="UniProtKB-EC"/>
</dbReference>
<dbReference type="GO" id="GO:0008289">
    <property type="term" value="F:lipid binding"/>
    <property type="evidence" value="ECO:0007669"/>
    <property type="project" value="UniProtKB-KW"/>
</dbReference>
<dbReference type="GO" id="GO:0035613">
    <property type="term" value="F:RNA stem-loop binding"/>
    <property type="evidence" value="ECO:0007669"/>
    <property type="project" value="TreeGrafter"/>
</dbReference>
<dbReference type="GO" id="GO:0003964">
    <property type="term" value="F:RNA-directed DNA polymerase activity"/>
    <property type="evidence" value="ECO:0007669"/>
    <property type="project" value="UniProtKB-KW"/>
</dbReference>
<dbReference type="GO" id="GO:0004523">
    <property type="term" value="F:RNA-DNA hybrid ribonuclease activity"/>
    <property type="evidence" value="ECO:0007669"/>
    <property type="project" value="InterPro"/>
</dbReference>
<dbReference type="GO" id="GO:0005198">
    <property type="term" value="F:structural molecule activity"/>
    <property type="evidence" value="ECO:0007669"/>
    <property type="project" value="InterPro"/>
</dbReference>
<dbReference type="GO" id="GO:0008270">
    <property type="term" value="F:zinc ion binding"/>
    <property type="evidence" value="ECO:0007669"/>
    <property type="project" value="UniProtKB-KW"/>
</dbReference>
<dbReference type="GO" id="GO:0015074">
    <property type="term" value="P:DNA integration"/>
    <property type="evidence" value="ECO:0007669"/>
    <property type="project" value="UniProtKB-KW"/>
</dbReference>
<dbReference type="GO" id="GO:0006310">
    <property type="term" value="P:DNA recombination"/>
    <property type="evidence" value="ECO:0007669"/>
    <property type="project" value="UniProtKB-KW"/>
</dbReference>
<dbReference type="GO" id="GO:0075713">
    <property type="term" value="P:establishment of integrated proviral latency"/>
    <property type="evidence" value="ECO:0007669"/>
    <property type="project" value="UniProtKB-KW"/>
</dbReference>
<dbReference type="GO" id="GO:0006508">
    <property type="term" value="P:proteolysis"/>
    <property type="evidence" value="ECO:0007669"/>
    <property type="project" value="UniProtKB-KW"/>
</dbReference>
<dbReference type="GO" id="GO:0046718">
    <property type="term" value="P:symbiont entry into host cell"/>
    <property type="evidence" value="ECO:0007669"/>
    <property type="project" value="UniProtKB-KW"/>
</dbReference>
<dbReference type="GO" id="GO:0039657">
    <property type="term" value="P:symbiont-mediated suppression of host gene expression"/>
    <property type="evidence" value="ECO:0007669"/>
    <property type="project" value="UniProtKB-KW"/>
</dbReference>
<dbReference type="GO" id="GO:0044826">
    <property type="term" value="P:viral genome integration into host DNA"/>
    <property type="evidence" value="ECO:0007669"/>
    <property type="project" value="UniProtKB-KW"/>
</dbReference>
<dbReference type="GO" id="GO:0075732">
    <property type="term" value="P:viral penetration into host nucleus"/>
    <property type="evidence" value="ECO:0007669"/>
    <property type="project" value="UniProtKB-KW"/>
</dbReference>
<dbReference type="GO" id="GO:0075523">
    <property type="term" value="P:viral translational frameshifting"/>
    <property type="evidence" value="ECO:0007669"/>
    <property type="project" value="UniProtKB-KW"/>
</dbReference>
<dbReference type="CDD" id="cd05482">
    <property type="entry name" value="HIV_retropepsin_like"/>
    <property type="match status" value="1"/>
</dbReference>
<dbReference type="Gene3D" id="1.10.10.200">
    <property type="match status" value="1"/>
</dbReference>
<dbReference type="Gene3D" id="1.10.1200.30">
    <property type="match status" value="1"/>
</dbReference>
<dbReference type="Gene3D" id="3.30.70.270">
    <property type="match status" value="3"/>
</dbReference>
<dbReference type="Gene3D" id="2.40.70.10">
    <property type="entry name" value="Acid Proteases"/>
    <property type="match status" value="1"/>
</dbReference>
<dbReference type="Gene3D" id="3.10.10.10">
    <property type="entry name" value="HIV Type 1 Reverse Transcriptase, subunit A, domain 1"/>
    <property type="match status" value="1"/>
</dbReference>
<dbReference type="Gene3D" id="1.10.375.10">
    <property type="entry name" value="Human Immunodeficiency Virus Type 1 Capsid Protein"/>
    <property type="match status" value="1"/>
</dbReference>
<dbReference type="Gene3D" id="1.10.150.90">
    <property type="entry name" value="Immunodeficiency lentiviruses, gag gene matrix protein p17"/>
    <property type="match status" value="1"/>
</dbReference>
<dbReference type="Gene3D" id="2.30.30.10">
    <property type="entry name" value="Integrase, C-terminal domain superfamily, retroviral"/>
    <property type="match status" value="1"/>
</dbReference>
<dbReference type="Gene3D" id="3.30.420.10">
    <property type="entry name" value="Ribonuclease H-like superfamily/Ribonuclease H"/>
    <property type="match status" value="2"/>
</dbReference>
<dbReference type="Gene3D" id="1.20.5.760">
    <property type="entry name" value="Single helix bin"/>
    <property type="match status" value="1"/>
</dbReference>
<dbReference type="Gene3D" id="4.10.60.10">
    <property type="entry name" value="Zinc finger, CCHC-type"/>
    <property type="match status" value="1"/>
</dbReference>
<dbReference type="InterPro" id="IPR001969">
    <property type="entry name" value="Aspartic_peptidase_AS"/>
</dbReference>
<dbReference type="InterPro" id="IPR043502">
    <property type="entry name" value="DNA/RNA_pol_sf"/>
</dbReference>
<dbReference type="InterPro" id="IPR045345">
    <property type="entry name" value="Gag_p24_C"/>
</dbReference>
<dbReference type="InterPro" id="IPR017856">
    <property type="entry name" value="Integrase-like_N"/>
</dbReference>
<dbReference type="InterPro" id="IPR036862">
    <property type="entry name" value="Integrase_C_dom_sf_retrovir"/>
</dbReference>
<dbReference type="InterPro" id="IPR001037">
    <property type="entry name" value="Integrase_C_retrovir"/>
</dbReference>
<dbReference type="InterPro" id="IPR001584">
    <property type="entry name" value="Integrase_cat-core"/>
</dbReference>
<dbReference type="InterPro" id="IPR003308">
    <property type="entry name" value="Integrase_Zn-bd_dom_N"/>
</dbReference>
<dbReference type="InterPro" id="IPR000071">
    <property type="entry name" value="Lentvrl_matrix_N"/>
</dbReference>
<dbReference type="InterPro" id="IPR012344">
    <property type="entry name" value="Matrix_HIV/RSV_N"/>
</dbReference>
<dbReference type="InterPro" id="IPR001995">
    <property type="entry name" value="Peptidase_A2_cat"/>
</dbReference>
<dbReference type="InterPro" id="IPR021109">
    <property type="entry name" value="Peptidase_aspartic_dom_sf"/>
</dbReference>
<dbReference type="InterPro" id="IPR034170">
    <property type="entry name" value="Retropepsin-like_cat_dom"/>
</dbReference>
<dbReference type="InterPro" id="IPR018061">
    <property type="entry name" value="Retropepsins"/>
</dbReference>
<dbReference type="InterPro" id="IPR008916">
    <property type="entry name" value="Retrov_capsid_C"/>
</dbReference>
<dbReference type="InterPro" id="IPR008919">
    <property type="entry name" value="Retrov_capsid_N"/>
</dbReference>
<dbReference type="InterPro" id="IPR010999">
    <property type="entry name" value="Retrovr_matrix"/>
</dbReference>
<dbReference type="InterPro" id="IPR043128">
    <property type="entry name" value="Rev_trsase/Diguanyl_cyclase"/>
</dbReference>
<dbReference type="InterPro" id="IPR012337">
    <property type="entry name" value="RNaseH-like_sf"/>
</dbReference>
<dbReference type="InterPro" id="IPR002156">
    <property type="entry name" value="RNaseH_domain"/>
</dbReference>
<dbReference type="InterPro" id="IPR036397">
    <property type="entry name" value="RNaseH_sf"/>
</dbReference>
<dbReference type="InterPro" id="IPR000477">
    <property type="entry name" value="RT_dom"/>
</dbReference>
<dbReference type="InterPro" id="IPR010659">
    <property type="entry name" value="RVT_connect"/>
</dbReference>
<dbReference type="InterPro" id="IPR010661">
    <property type="entry name" value="RVT_thumb"/>
</dbReference>
<dbReference type="InterPro" id="IPR001878">
    <property type="entry name" value="Znf_CCHC"/>
</dbReference>
<dbReference type="InterPro" id="IPR036875">
    <property type="entry name" value="Znf_CCHC_sf"/>
</dbReference>
<dbReference type="PANTHER" id="PTHR41694">
    <property type="entry name" value="ENDOGENOUS RETROVIRUS GROUP K MEMBER POL PROTEIN"/>
    <property type="match status" value="1"/>
</dbReference>
<dbReference type="PANTHER" id="PTHR41694:SF3">
    <property type="entry name" value="RNA-DIRECTED DNA POLYMERASE-RELATED"/>
    <property type="match status" value="1"/>
</dbReference>
<dbReference type="Pfam" id="PF00540">
    <property type="entry name" value="Gag_p17"/>
    <property type="match status" value="1"/>
</dbReference>
<dbReference type="Pfam" id="PF00607">
    <property type="entry name" value="Gag_p24"/>
    <property type="match status" value="1"/>
</dbReference>
<dbReference type="Pfam" id="PF19317">
    <property type="entry name" value="Gag_p24_C"/>
    <property type="match status" value="1"/>
</dbReference>
<dbReference type="Pfam" id="PF00552">
    <property type="entry name" value="IN_DBD_C"/>
    <property type="match status" value="1"/>
</dbReference>
<dbReference type="Pfam" id="PF02022">
    <property type="entry name" value="Integrase_Zn"/>
    <property type="match status" value="1"/>
</dbReference>
<dbReference type="Pfam" id="PF00075">
    <property type="entry name" value="RNase_H"/>
    <property type="match status" value="1"/>
</dbReference>
<dbReference type="Pfam" id="PF00665">
    <property type="entry name" value="rve"/>
    <property type="match status" value="1"/>
</dbReference>
<dbReference type="Pfam" id="PF00077">
    <property type="entry name" value="RVP"/>
    <property type="match status" value="1"/>
</dbReference>
<dbReference type="Pfam" id="PF00078">
    <property type="entry name" value="RVT_1"/>
    <property type="match status" value="1"/>
</dbReference>
<dbReference type="Pfam" id="PF06815">
    <property type="entry name" value="RVT_connect"/>
    <property type="match status" value="1"/>
</dbReference>
<dbReference type="Pfam" id="PF06817">
    <property type="entry name" value="RVT_thumb"/>
    <property type="match status" value="1"/>
</dbReference>
<dbReference type="Pfam" id="PF00098">
    <property type="entry name" value="zf-CCHC"/>
    <property type="match status" value="2"/>
</dbReference>
<dbReference type="PRINTS" id="PR00234">
    <property type="entry name" value="HIV1MATRIX"/>
</dbReference>
<dbReference type="SMART" id="SM00343">
    <property type="entry name" value="ZnF_C2HC"/>
    <property type="match status" value="2"/>
</dbReference>
<dbReference type="SUPFAM" id="SSF50630">
    <property type="entry name" value="Acid proteases"/>
    <property type="match status" value="1"/>
</dbReference>
<dbReference type="SUPFAM" id="SSF50122">
    <property type="entry name" value="DNA-binding domain of retroviral integrase"/>
    <property type="match status" value="1"/>
</dbReference>
<dbReference type="SUPFAM" id="SSF56672">
    <property type="entry name" value="DNA/RNA polymerases"/>
    <property type="match status" value="1"/>
</dbReference>
<dbReference type="SUPFAM" id="SSF46919">
    <property type="entry name" value="N-terminal Zn binding domain of HIV integrase"/>
    <property type="match status" value="1"/>
</dbReference>
<dbReference type="SUPFAM" id="SSF47836">
    <property type="entry name" value="Retroviral matrix proteins"/>
    <property type="match status" value="1"/>
</dbReference>
<dbReference type="SUPFAM" id="SSF47353">
    <property type="entry name" value="Retrovirus capsid dimerization domain-like"/>
    <property type="match status" value="1"/>
</dbReference>
<dbReference type="SUPFAM" id="SSF47943">
    <property type="entry name" value="Retrovirus capsid protein, N-terminal core domain"/>
    <property type="match status" value="1"/>
</dbReference>
<dbReference type="SUPFAM" id="SSF57756">
    <property type="entry name" value="Retrovirus zinc finger-like domains"/>
    <property type="match status" value="1"/>
</dbReference>
<dbReference type="SUPFAM" id="SSF53098">
    <property type="entry name" value="Ribonuclease H-like"/>
    <property type="match status" value="2"/>
</dbReference>
<dbReference type="PROSITE" id="PS50175">
    <property type="entry name" value="ASP_PROT_RETROV"/>
    <property type="match status" value="1"/>
</dbReference>
<dbReference type="PROSITE" id="PS00141">
    <property type="entry name" value="ASP_PROTEASE"/>
    <property type="match status" value="1"/>
</dbReference>
<dbReference type="PROSITE" id="PS50994">
    <property type="entry name" value="INTEGRASE"/>
    <property type="match status" value="1"/>
</dbReference>
<dbReference type="PROSITE" id="PS51027">
    <property type="entry name" value="INTEGRASE_DBD"/>
    <property type="match status" value="1"/>
</dbReference>
<dbReference type="PROSITE" id="PS50879">
    <property type="entry name" value="RNASE_H_1"/>
    <property type="match status" value="1"/>
</dbReference>
<dbReference type="PROSITE" id="PS50878">
    <property type="entry name" value="RT_POL"/>
    <property type="match status" value="1"/>
</dbReference>
<dbReference type="PROSITE" id="PS50158">
    <property type="entry name" value="ZF_CCHC"/>
    <property type="match status" value="2"/>
</dbReference>
<dbReference type="PROSITE" id="PS50876">
    <property type="entry name" value="ZF_INTEGRASE"/>
    <property type="match status" value="1"/>
</dbReference>
<gene>
    <name type="primary">gag-pol</name>
</gene>
<evidence type="ECO:0000250" key="1"/>
<evidence type="ECO:0000250" key="2">
    <source>
        <dbReference type="UniProtKB" id="P03348"/>
    </source>
</evidence>
<evidence type="ECO:0000250" key="3">
    <source>
        <dbReference type="UniProtKB" id="P03366"/>
    </source>
</evidence>
<evidence type="ECO:0000250" key="4">
    <source>
        <dbReference type="UniProtKB" id="P03367"/>
    </source>
</evidence>
<evidence type="ECO:0000250" key="5">
    <source>
        <dbReference type="UniProtKB" id="P04585"/>
    </source>
</evidence>
<evidence type="ECO:0000250" key="6">
    <source>
        <dbReference type="UniProtKB" id="P04591"/>
    </source>
</evidence>
<evidence type="ECO:0000250" key="7">
    <source>
        <dbReference type="UniProtKB" id="P12493"/>
    </source>
</evidence>
<evidence type="ECO:0000250" key="8">
    <source>
        <dbReference type="UniProtKB" id="P12497"/>
    </source>
</evidence>
<evidence type="ECO:0000255" key="9"/>
<evidence type="ECO:0000255" key="10">
    <source>
        <dbReference type="PROSITE-ProRule" id="PRU00047"/>
    </source>
</evidence>
<evidence type="ECO:0000255" key="11">
    <source>
        <dbReference type="PROSITE-ProRule" id="PRU00275"/>
    </source>
</evidence>
<evidence type="ECO:0000255" key="12">
    <source>
        <dbReference type="PROSITE-ProRule" id="PRU00405"/>
    </source>
</evidence>
<evidence type="ECO:0000255" key="13">
    <source>
        <dbReference type="PROSITE-ProRule" id="PRU00408"/>
    </source>
</evidence>
<evidence type="ECO:0000255" key="14">
    <source>
        <dbReference type="PROSITE-ProRule" id="PRU00450"/>
    </source>
</evidence>
<evidence type="ECO:0000255" key="15">
    <source>
        <dbReference type="PROSITE-ProRule" id="PRU00457"/>
    </source>
</evidence>
<evidence type="ECO:0000255" key="16">
    <source>
        <dbReference type="PROSITE-ProRule" id="PRU00506"/>
    </source>
</evidence>
<evidence type="ECO:0000255" key="17">
    <source>
        <dbReference type="PROSITE-ProRule" id="PRU10094"/>
    </source>
</evidence>
<evidence type="ECO:0000256" key="18">
    <source>
        <dbReference type="SAM" id="MobiDB-lite"/>
    </source>
</evidence>
<evidence type="ECO:0000305" key="19"/>
<feature type="initiator methionine" description="Removed; by host" evidence="1">
    <location>
        <position position="1"/>
    </location>
</feature>
<feature type="chain" id="PRO_0000261292" description="Gag-Pol polyprotein">
    <location>
        <begin position="2"/>
        <end position="1462"/>
    </location>
</feature>
<feature type="chain" id="PRO_0000042449" description="Matrix protein p17" evidence="1">
    <location>
        <begin position="2"/>
        <end position="135"/>
    </location>
</feature>
<feature type="chain" id="PRO_0000042450" description="Capsid protein p24" evidence="1">
    <location>
        <begin position="136"/>
        <end position="365"/>
    </location>
</feature>
<feature type="peptide" id="PRO_0000042452" description="Spacer peptide 1" evidence="1">
    <location>
        <begin position="366"/>
        <end position="382"/>
    </location>
</feature>
<feature type="chain" id="PRO_0000042453" description="Nucleocapsid protein p7" evidence="1">
    <location>
        <begin position="383"/>
        <end position="431"/>
    </location>
</feature>
<feature type="peptide" id="PRO_0000246741" description="Transframe peptide" evidence="9">
    <location>
        <begin position="432"/>
        <end position="444"/>
    </location>
</feature>
<feature type="chain" id="PRO_0000042455" description="p6-pol" evidence="9">
    <location>
        <begin position="445"/>
        <end position="511"/>
    </location>
</feature>
<feature type="chain" id="PRO_0000038666" description="Protease" evidence="1">
    <location>
        <begin position="512"/>
        <end position="610"/>
    </location>
</feature>
<feature type="chain" id="PRO_0000042456" description="Reverse transcriptase/ribonuclease H" evidence="1">
    <location>
        <begin position="611"/>
        <end position="1169"/>
    </location>
</feature>
<feature type="chain" id="PRO_0000042457" description="p51 RT" evidence="1">
    <location>
        <begin position="611"/>
        <end position="1049"/>
    </location>
</feature>
<feature type="chain" id="PRO_0000042458" description="p15" evidence="1">
    <location>
        <begin position="1050"/>
        <end position="1169"/>
    </location>
</feature>
<feature type="chain" id="PRO_0000042459" description="Integrase" evidence="1">
    <location>
        <begin position="1170"/>
        <end position="1462"/>
    </location>
</feature>
<feature type="domain" description="Peptidase A2" evidence="11">
    <location>
        <begin position="532"/>
        <end position="601"/>
    </location>
</feature>
<feature type="domain" description="Reverse transcriptase" evidence="12">
    <location>
        <begin position="655"/>
        <end position="845"/>
    </location>
</feature>
<feature type="domain" description="RNase H type-1" evidence="13">
    <location>
        <begin position="1043"/>
        <end position="1166"/>
    </location>
</feature>
<feature type="domain" description="Integrase catalytic" evidence="15">
    <location>
        <begin position="1223"/>
        <end position="1374"/>
    </location>
</feature>
<feature type="zinc finger region" description="CCHC-type 1" evidence="10">
    <location>
        <begin position="389"/>
        <end position="406"/>
    </location>
</feature>
<feature type="zinc finger region" description="CCHC-type 2" evidence="10">
    <location>
        <begin position="410"/>
        <end position="427"/>
    </location>
</feature>
<feature type="zinc finger region" description="Integrase-type" evidence="14">
    <location>
        <begin position="1172"/>
        <end position="1213"/>
    </location>
</feature>
<feature type="DNA-binding region" description="Integrase-type" evidence="16">
    <location>
        <begin position="1392"/>
        <end position="1439"/>
    </location>
</feature>
<feature type="region of interest" description="Interaction with Gp41" evidence="8">
    <location>
        <begin position="7"/>
        <end position="31"/>
    </location>
</feature>
<feature type="region of interest" description="Interaction with human PPIA/CYPA and NUP153" evidence="8">
    <location>
        <begin position="191"/>
        <end position="228"/>
    </location>
</feature>
<feature type="region of interest" description="Dimerization/Multimerization of capsid protein p24" evidence="5">
    <location>
        <begin position="279"/>
        <end position="365"/>
    </location>
</feature>
<feature type="region of interest" description="Disordered" evidence="18">
    <location>
        <begin position="433"/>
        <end position="509"/>
    </location>
</feature>
<feature type="region of interest" description="Dimerization of protease" evidence="5">
    <location>
        <begin position="512"/>
        <end position="516"/>
    </location>
</feature>
<feature type="region of interest" description="Dimerization of protease" evidence="5">
    <location>
        <begin position="560"/>
        <end position="566"/>
    </location>
</feature>
<feature type="region of interest" description="Dimerization of protease" evidence="5">
    <location>
        <begin position="599"/>
        <end position="611"/>
    </location>
</feature>
<feature type="region of interest" description="RT 'primer grip'" evidence="1">
    <location>
        <begin position="837"/>
        <end position="845"/>
    </location>
</feature>
<feature type="short sequence motif" description="Nuclear export signal" evidence="1">
    <location>
        <begin position="16"/>
        <end position="22"/>
    </location>
</feature>
<feature type="short sequence motif" description="Nuclear localization signal" evidence="1">
    <location>
        <begin position="26"/>
        <end position="32"/>
    </location>
</feature>
<feature type="short sequence motif" description="Tryptophan repeat motif" evidence="1">
    <location>
        <begin position="1007"/>
        <end position="1023"/>
    </location>
</feature>
<feature type="compositionally biased region" description="Polar residues" evidence="18">
    <location>
        <begin position="448"/>
        <end position="465"/>
    </location>
</feature>
<feature type="compositionally biased region" description="Basic and acidic residues" evidence="18">
    <location>
        <begin position="472"/>
        <end position="482"/>
    </location>
</feature>
<feature type="compositionally biased region" description="Basic and acidic residues" evidence="18">
    <location>
        <begin position="497"/>
        <end position="507"/>
    </location>
</feature>
<feature type="active site" description="For protease activity; shared with dimeric partner" evidence="17">
    <location>
        <position position="536"/>
    </location>
</feature>
<feature type="binding site" evidence="1">
    <location>
        <position position="720"/>
    </location>
    <ligand>
        <name>Mg(2+)</name>
        <dbReference type="ChEBI" id="CHEBI:18420"/>
        <label>1</label>
        <note>catalytic; for reverse transcriptase activity</note>
    </ligand>
</feature>
<feature type="binding site" evidence="1">
    <location>
        <position position="795"/>
    </location>
    <ligand>
        <name>Mg(2+)</name>
        <dbReference type="ChEBI" id="CHEBI:18420"/>
        <label>1</label>
        <note>catalytic; for reverse transcriptase activity</note>
    </ligand>
</feature>
<feature type="binding site" evidence="1">
    <location>
        <position position="796"/>
    </location>
    <ligand>
        <name>Mg(2+)</name>
        <dbReference type="ChEBI" id="CHEBI:18420"/>
        <label>1</label>
        <note>catalytic; for reverse transcriptase activity</note>
    </ligand>
</feature>
<feature type="binding site" evidence="1">
    <location>
        <position position="1052"/>
    </location>
    <ligand>
        <name>Mg(2+)</name>
        <dbReference type="ChEBI" id="CHEBI:18420"/>
        <label>2</label>
        <note>catalytic; for RNase H activity</note>
    </ligand>
</feature>
<feature type="binding site" evidence="1">
    <location>
        <position position="1087"/>
    </location>
    <ligand>
        <name>Mg(2+)</name>
        <dbReference type="ChEBI" id="CHEBI:18420"/>
        <label>2</label>
        <note>catalytic; for RNase H activity</note>
    </ligand>
</feature>
<feature type="binding site" evidence="1">
    <location>
        <position position="1107"/>
    </location>
    <ligand>
        <name>Mg(2+)</name>
        <dbReference type="ChEBI" id="CHEBI:18420"/>
        <label>2</label>
        <note>catalytic; for RNase H activity</note>
    </ligand>
</feature>
<feature type="binding site" evidence="1">
    <location>
        <position position="1158"/>
    </location>
    <ligand>
        <name>Mg(2+)</name>
        <dbReference type="ChEBI" id="CHEBI:18420"/>
        <label>2</label>
        <note>catalytic; for RNase H activity</note>
    </ligand>
</feature>
<feature type="binding site" evidence="14">
    <location>
        <position position="1181"/>
    </location>
    <ligand>
        <name>Zn(2+)</name>
        <dbReference type="ChEBI" id="CHEBI:29105"/>
    </ligand>
</feature>
<feature type="binding site" evidence="14">
    <location>
        <position position="1185"/>
    </location>
    <ligand>
        <name>Zn(2+)</name>
        <dbReference type="ChEBI" id="CHEBI:29105"/>
    </ligand>
</feature>
<feature type="binding site" evidence="14">
    <location>
        <position position="1209"/>
    </location>
    <ligand>
        <name>Zn(2+)</name>
        <dbReference type="ChEBI" id="CHEBI:29105"/>
    </ligand>
</feature>
<feature type="binding site" evidence="14">
    <location>
        <position position="1212"/>
    </location>
    <ligand>
        <name>Zn(2+)</name>
        <dbReference type="ChEBI" id="CHEBI:29105"/>
    </ligand>
</feature>
<feature type="binding site" evidence="1">
    <location>
        <position position="1233"/>
    </location>
    <ligand>
        <name>Mg(2+)</name>
        <dbReference type="ChEBI" id="CHEBI:18420"/>
        <label>3</label>
        <note>catalytic; for integrase activity</note>
    </ligand>
</feature>
<feature type="binding site" evidence="1">
    <location>
        <position position="1285"/>
    </location>
    <ligand>
        <name>Mg(2+)</name>
        <dbReference type="ChEBI" id="CHEBI:18420"/>
        <label>3</label>
        <note>catalytic; for integrase activity</note>
    </ligand>
</feature>
<feature type="binding site" evidence="5">
    <location>
        <position position="1321"/>
    </location>
    <ligand>
        <name>Mg(2+)</name>
        <dbReference type="ChEBI" id="CHEBI:18420"/>
        <label>3</label>
        <note>catalytic; for integrase activity</note>
    </ligand>
</feature>
<feature type="site" description="Cleavage; by viral protease" evidence="1">
    <location>
        <begin position="135"/>
        <end position="136"/>
    </location>
</feature>
<feature type="site" description="Cis/trans isomerization of proline peptide bond; by human PPIA/CYPA" evidence="1">
    <location>
        <begin position="222"/>
        <end position="223"/>
    </location>
</feature>
<feature type="site" description="Cleavage; by viral protease" evidence="1">
    <location>
        <begin position="365"/>
        <end position="366"/>
    </location>
</feature>
<feature type="site" description="Cleavage; by viral protease" evidence="1">
    <location>
        <begin position="382"/>
        <end position="383"/>
    </location>
</feature>
<feature type="site" description="Cleavage; by viral protease" evidence="9">
    <location>
        <begin position="431"/>
        <end position="432"/>
    </location>
</feature>
<feature type="site" description="Cleavage; by viral protease" evidence="1">
    <location>
        <begin position="444"/>
        <end position="445"/>
    </location>
</feature>
<feature type="site" description="Cleavage; by viral protease" evidence="1">
    <location>
        <begin position="511"/>
        <end position="512"/>
    </location>
</feature>
<feature type="site" description="Cleavage; by viral protease" evidence="1">
    <location>
        <begin position="610"/>
        <end position="611"/>
    </location>
</feature>
<feature type="site" description="Essential for RT p66/p51 heterodimerization" evidence="1">
    <location>
        <position position="1010"/>
    </location>
</feature>
<feature type="site" description="Essential for RT p66/p51 heterodimerization" evidence="1">
    <location>
        <position position="1023"/>
    </location>
</feature>
<feature type="site" description="Cleavage; by viral protease; partial" evidence="1">
    <location>
        <begin position="1049"/>
        <end position="1050"/>
    </location>
</feature>
<feature type="site" description="Cleavage; by viral protease" evidence="1">
    <location>
        <begin position="1169"/>
        <end position="1170"/>
    </location>
</feature>
<feature type="lipid moiety-binding region" description="N-myristoyl glycine; by host" evidence="1">
    <location>
        <position position="2"/>
    </location>
</feature>
<name>POL_HV2D1</name>
<accession>P17757</accession>
<comment type="function">
    <molecule>Gag-Pol polyprotein</molecule>
    <text evidence="1">Mediates, with Gag polyprotein, the essential events in virion assembly, including binding the plasma membrane, making the protein-protein interactions necessary to create spherical particles, recruiting the viral Env proteins, and packaging the genomic RNA via direct interactions with the RNA packaging sequence (Psi). Gag-Pol polyprotein may regulate its own translation, by the binding genomic RNA in the 5'-UTR. At low concentration, the polyprotein would promote translation, whereas at high concentration, the polyprotein would encapsidate genomic RNA and then shut off translation.</text>
</comment>
<comment type="function">
    <molecule>Matrix protein p17</molecule>
    <text evidence="8">Targets the polyprotein to the plasma membrane via a multipartite membrane-binding signal, that includes its myristoylated N-terminus. Matrix protein is part of the pre-integration complex. Implicated in the release from host cell mediated by Vpu. Binds to RNA.</text>
</comment>
<comment type="function">
    <molecule>Capsid protein p24</molecule>
    <text evidence="5 8">Forms the conical core that encapsulates the genomic RNA-nucleocapsid complex in the virion. Most core are conical, with only 7% tubular. The core is constituted by capsid protein hexamer subunits. The core is disassembled soon after virion entry (By similarity). Host restriction factors such as TRIM5-alpha or TRIMCyp bind retroviral capsids and cause premature capsid disassembly, leading to blocks in reverse transcription. Capsid restriction by TRIM5 is one of the factors which restricts HIV-1 to the human species. Host PIN1 apparently facilitates the virion uncoating. On the other hand, interactions with PDZD8 or CYPA stabilize the capsid.</text>
</comment>
<comment type="function">
    <molecule>Nucleocapsid protein p7</molecule>
    <text evidence="5">Encapsulates and protects viral dimeric unspliced genomic RNA (gRNA). Binds these RNAs through its zinc fingers. Acts as a nucleic acid chaperone which is involved in rearangement of nucleic acid secondary structure during gRNA retrotranscription. Also facilitates template switch leading to recombination. As part of the polyprotein, participates in gRNA dimerization, packaging, tRNA incorporation and virion assembly.</text>
</comment>
<comment type="function">
    <molecule>Protease</molecule>
    <text evidence="5 11">Aspartyl protease that mediates proteolytic cleavages of Gag and Gag-Pol polyproteins during or shortly after the release of the virion from the plasma membrane. Cleavages take place as an ordered, step-wise cascade to yield mature proteins. This process is called maturation. Displays maximal activity during the budding process just prior to particle release from the cell. Also cleaves Nef and Vif, probably concomitantly with viral structural proteins on maturation of virus particles. Hydrolyzes host EIF4GI and PABP1 in order to shut off the capped cellular mRNA translation. The resulting inhibition of cellular protein synthesis serves to ensure maximal viral gene expression and to evade host immune response (By similarity).</text>
</comment>
<comment type="function">
    <molecule>Reverse transcriptase/ribonuclease H</molecule>
    <text evidence="5">Multifunctional enzyme that converts the viral RNA genome into dsDNA in the cytoplasm, shortly after virus entry into the cell. This enzyme displays a DNA polymerase activity that can copy either DNA or RNA templates, and a ribonuclease H (RNase H) activity that cleaves the RNA strand of RNA-DNA heteroduplexes in a partially processive 3' to 5' endonucleasic mode. Conversion of viral genomic RNA into dsDNA requires many steps. A tRNA(3)-Lys binds to the primer-binding site (PBS) situated at the 5'-end of the viral RNA. RT uses the 3' end of the tRNA primer to perform a short round of RNA-dependent minus-strand DNA synthesis. The reading proceeds through the U5 region and ends after the repeated (R) region which is present at both ends of viral RNA. The portion of the RNA-DNA heteroduplex is digested by the RNase H, resulting in a ssDNA product attached to the tRNA primer. This ssDNA/tRNA hybridizes with the identical R region situated at the 3' end of viral RNA. This template exchange, known as minus-strand DNA strong stop transfer, can be either intra- or intermolecular. RT uses the 3' end of this newly synthesized short ssDNA to perform the RNA-dependent minus-strand DNA synthesis of the whole template. RNase H digests the RNA template except for two polypurine tracts (PPTs) situated at the 5'-end and near the center of the genome. It is not clear if both polymerase and RNase H activities are simultaneous. RNase H probably can proceed both in a polymerase-dependent (RNA cut into small fragments by the same RT performing DNA synthesis) and a polymerase-independent mode (cleavage of remaining RNA fragments by free RTs). Secondly, RT performs DNA-directed plus-strand DNA synthesis using the PPTs that have not been removed by RNase H as primers. PPTs and tRNA primers are then removed by RNase H. The 3' and 5' ssDNA PBS regions hybridize to form a circular dsDNA intermediate. Strand displacement synthesis by RT to the PBS and PPT ends produces a blunt ended, linear dsDNA copy of the viral genome that includes long terminal repeats (LTRs) at both ends.</text>
</comment>
<comment type="function">
    <molecule>Integrase</molecule>
    <text evidence="5">Catalyzes viral DNA integration into the host chromosome, by performing a series of DNA cutting and joining reactions. This enzyme activity takes place after virion entry into a cell and reverse transcription of the RNA genome in dsDNA. The first step in the integration process is 3' processing. This step requires a complex comprising the viral genome, matrix protein, Vpr and integrase. This complex is called the pre-integration complex (PIC). The integrase protein removes 2 nucleotides from each 3' end of the viral DNA, leaving recessed CA OH's at the 3' ends. In the second step, the PIC enters cell nucleus. This process is mediated through integrase and Vpr proteins, and allows the virus to infect a non dividing cell. This ability to enter the nucleus is specific of lentiviruses, other retroviruses cannot and rely on cell division to access cell chromosomes. In the third step, termed strand transfer, the integrase protein joins the previously processed 3' ends to the 5' ends of strands of target cellular DNA at the site of integration. The 5'-ends are produced by integrase-catalyzed staggered cuts, 5 bp apart. A Y-shaped, gapped, recombination intermediate results, with the 5'-ends of the viral DNA strands and the 3' ends of target DNA strands remaining unjoined, flanking a gap of 5 bp. The last step is viral DNA integration into host chromosome. This involves host DNA repair synthesis in which the 5 bp gaps between the unjoined strands are filled in and then ligated. Since this process occurs at both cuts flanking the HIV genome, a 5 bp duplication of host DNA is produced at the ends of HIV-1 integration. Alternatively, Integrase may catalyze the excision of viral DNA just after strand transfer, this is termed disintegration.</text>
</comment>
<comment type="catalytic activity">
    <reaction evidence="11">
        <text>Endopeptidase for which the P1 residue is preferably hydrophobic.</text>
        <dbReference type="EC" id="3.4.23.47"/>
    </reaction>
</comment>
<comment type="catalytic activity">
    <reaction evidence="1">
        <text>Endohydrolysis of RNA in RNA/DNA hybrids. Three different cleavage modes: 1. sequence-specific internal cleavage of RNA. Human immunodeficiency virus type 1 and Moloney murine leukemia virus enzymes prefer to cleave the RNA strand one nucleotide away from the RNA-DNA junction. 2. RNA 5'-end directed cleavage 13-19 nucleotides from the RNA end. 3. DNA 3'-end directed cleavage 15-20 nucleotides away from the primer terminus.</text>
        <dbReference type="EC" id="3.1.26.13"/>
    </reaction>
</comment>
<comment type="catalytic activity">
    <reaction evidence="1">
        <text>3'-end directed exonucleolytic cleavage of viral RNA-DNA hybrid.</text>
        <dbReference type="EC" id="3.1.13.2"/>
    </reaction>
</comment>
<comment type="catalytic activity">
    <reaction evidence="12">
        <text>DNA(n) + a 2'-deoxyribonucleoside 5'-triphosphate = DNA(n+1) + diphosphate</text>
        <dbReference type="Rhea" id="RHEA:22508"/>
        <dbReference type="Rhea" id="RHEA-COMP:17339"/>
        <dbReference type="Rhea" id="RHEA-COMP:17340"/>
        <dbReference type="ChEBI" id="CHEBI:33019"/>
        <dbReference type="ChEBI" id="CHEBI:61560"/>
        <dbReference type="ChEBI" id="CHEBI:173112"/>
        <dbReference type="EC" id="2.7.7.49"/>
    </reaction>
</comment>
<comment type="catalytic activity">
    <reaction evidence="12">
        <text>DNA(n) + a 2'-deoxyribonucleoside 5'-triphosphate = DNA(n+1) + diphosphate</text>
        <dbReference type="Rhea" id="RHEA:22508"/>
        <dbReference type="Rhea" id="RHEA-COMP:17339"/>
        <dbReference type="Rhea" id="RHEA-COMP:17340"/>
        <dbReference type="ChEBI" id="CHEBI:33019"/>
        <dbReference type="ChEBI" id="CHEBI:61560"/>
        <dbReference type="ChEBI" id="CHEBI:173112"/>
        <dbReference type="EC" id="2.7.7.7"/>
    </reaction>
</comment>
<comment type="cofactor">
    <cofactor evidence="1">
        <name>Mg(2+)</name>
        <dbReference type="ChEBI" id="CHEBI:18420"/>
    </cofactor>
    <text evidence="1">Binds 2 magnesium ions for reverse transcriptase polymerase activity.</text>
</comment>
<comment type="cofactor">
    <cofactor evidence="1">
        <name>Mg(2+)</name>
        <dbReference type="ChEBI" id="CHEBI:18420"/>
    </cofactor>
    <text evidence="1">Binds 2 magnesium ions for ribonuclease H (RNase H) activity. Substrate-binding is a precondition for magnesium binding.</text>
</comment>
<comment type="cofactor">
    <cofactor evidence="1">
        <name>Mg(2+)</name>
        <dbReference type="ChEBI" id="CHEBI:18420"/>
    </cofactor>
    <text evidence="1">Magnesium ions are required for integrase activity. Binds at least 1, maybe 2 magnesium ions.</text>
</comment>
<comment type="activity regulation">
    <text evidence="1">Protease: The viral protease is inhibited by many synthetic protease inhibitors (PIs), such as amprenavir, atazanavir, indinavir, loprinavir, nelfinavir, ritonavir and saquinavir. Use of protease inhibitors in tritherapy regimens permit more ambitious therapeutic strategies. Reverse transcriptase/ribonuclease H: RT can be inhibited either by nucleoside RT inhibitors (NRTIs) or by non nucleoside RT inhibitors (NNRTIs). NRTIs act as chain terminators, whereas NNRTIs inhibit DNA polymerization by binding a small hydrophobic pocket near the RT active site and inducing an allosteric change in this region. Classical NRTIs are abacavir, adefovir (PMEA), didanosine (ddI), lamivudine (3TC), stavudine (d4T), tenofovir (PMPA), zalcitabine (ddC), and zidovudine (AZT). Classical NNRTIs are atevirdine (BHAP U-87201E), delavirdine, efavirenz (DMP-266), emivirine (I-EBU), and nevirapine (BI-RG-587). The tritherapies used as a basic effective treatment of AIDS associate two NRTIs and one NNRTI.</text>
</comment>
<comment type="subunit">
    <molecule>Matrix protein p17</molecule>
    <text evidence="6 7">Homotrimer; further assembles as hexamers of trimers. Interacts with gp41 (via C-terminus). Interacts with host CALM1; this interaction induces a conformational change in the Matrix protein, triggering exposure of the myristate group. Interacts with host AP3D1; this interaction allows the polyprotein trafficking to multivesicular bodies during virus assembly. Part of the pre-integration complex (PIC) which is composed of viral genome, matrix protein, Vpr and integrase.</text>
</comment>
<comment type="subunit">
    <molecule>Capsid protein p24</molecule>
    <text evidence="2 6 7">Homodimer; the homodimer further multimerizes as homohexamers or homopentamers. Interacts with human PPIA/CYPA. Interacts with human NUP153. Interacts with host PDZD8; this interaction stabilizes the capsid. Interacts with monkey TRIM5; this interaction destabilizes the capsid.</text>
</comment>
<comment type="subunit">
    <molecule>Protease</molecule>
    <text evidence="5 8">Homodimer, whose active site consists of two apposed aspartic acid residues.</text>
</comment>
<comment type="subunit">
    <molecule>Reverse transcriptase/ribonuclease H</molecule>
    <text evidence="3">Heterodimer of p66 RT and p51 RT (RT p66/p51) (By similarity). Heterodimerization of RT is essential for DNA polymerase activity (By similarity). The overall folding of the subdomains is similar in p66 RT and p51 RT but the spatial arrangements of the subdomains are dramatically different (By similarity).</text>
</comment>
<comment type="subunit">
    <molecule>Integrase</molecule>
    <text evidence="4 5 8">Homotetramer; may further associate as a homohexadecamer (By similarity). Part of the pre-integration complex (PIC) which is composed of viral genome, matrix protein, Vpr and integrase. Interacts with human SMARCB1/INI1 and human PSIP1/LEDGF isoform 1. Interacts with human KPNA3; this interaction might play a role in nuclear import of the pre-integration complex (By similarity). Interacts with human NUP153; this interaction might play a role in nuclear import of the pre-integration complex (By similarity).</text>
</comment>
<comment type="subcellular location">
    <molecule>Gag-Pol polyprotein</molecule>
    <subcellularLocation>
        <location>Host cell membrane</location>
        <topology>Lipid-anchor</topology>
    </subcellularLocation>
    <subcellularLocation>
        <location>Host endosome</location>
        <location>Host multivesicular body</location>
    </subcellularLocation>
    <text evidence="8">These locations are linked to virus assembly sites. The main location is the cell membrane, but under some circumstances, late endosomal compartments can serve as productive sites for virion assembly.</text>
</comment>
<comment type="subcellular location">
    <molecule>Matrix protein p17</molecule>
    <subcellularLocation>
        <location>Virion membrane</location>
        <topology evidence="19">Lipid-anchor</topology>
    </subcellularLocation>
    <subcellularLocation>
        <location evidence="1">Host nucleus</location>
    </subcellularLocation>
    <subcellularLocation>
        <location evidence="1">Host cytoplasm</location>
    </subcellularLocation>
</comment>
<comment type="subcellular location">
    <molecule>Capsid protein p24</molecule>
    <subcellularLocation>
        <location evidence="19">Virion</location>
    </subcellularLocation>
</comment>
<comment type="subcellular location">
    <molecule>Nucleocapsid protein p7</molecule>
    <subcellularLocation>
        <location evidence="19">Virion</location>
    </subcellularLocation>
</comment>
<comment type="subcellular location">
    <molecule>Reverse transcriptase/ribonuclease H</molecule>
    <subcellularLocation>
        <location evidence="19">Virion</location>
    </subcellularLocation>
</comment>
<comment type="subcellular location">
    <molecule>Integrase</molecule>
    <subcellularLocation>
        <location evidence="19">Virion</location>
    </subcellularLocation>
    <subcellularLocation>
        <location evidence="19">Host nucleus</location>
    </subcellularLocation>
    <subcellularLocation>
        <location evidence="19">Host cytoplasm</location>
    </subcellularLocation>
    <text evidence="19">Nuclear at initial phase, cytoplasmic at assembly.</text>
</comment>
<comment type="alternative products">
    <event type="ribosomal frameshifting"/>
    <isoform>
        <id>P17757-1</id>
        <name>Gag-Pol polyprotein</name>
        <sequence type="displayed"/>
    </isoform>
    <isoform>
        <id>P17756-1</id>
        <name>Gag polyprotein</name>
        <sequence type="external"/>
    </isoform>
    <text>Translation results in the formation of the Gag polyprotein most of the time. Ribosomal frameshifting at the gag-pol genes boundary occurs at low frequency and produces the Gag-Pol polyprotein. This strategy of translation probably allows the virus to modulate the quantity of each viral protein. Maintenance of a correct Gag to Gag-Pol ratio is essential for RNA dimerization and viral infectivity.</text>
</comment>
<comment type="domain">
    <molecule>Reverse transcriptase/ribonuclease H</molecule>
    <text evidence="1">RT is structured in five subdomains: finger, palm, thumb, connection and RNase H. Within the palm subdomain, the 'primer grip' region is thought to be involved in the positioning of the primer terminus for accommodating the incoming nucleotide. The RNase H domain stabilizes the association of RT with primer-template.</text>
</comment>
<comment type="domain">
    <molecule>Reverse transcriptase/ribonuclease H</molecule>
    <text evidence="1">The tryptophan repeat motif is involved in RT p66/p51 dimerization (By similarity).</text>
</comment>
<comment type="domain">
    <molecule>Integrase</molecule>
    <text evidence="1">The core domain contains the D-x(n)-D-x(35)-E motif, named for the phylogenetically conserved glutamic acid and aspartic acid residues and the invariant 35 amino acid spacing between the second and third acidic residues. Each acidic residue of the D,D(35)E motif is independently essential for the 3'-processing and strand transfer activities of purified integrase protein.</text>
</comment>
<comment type="PTM">
    <molecule>Gag-Pol polyprotein</molecule>
    <text evidence="5 12">Specific enzymatic cleavages by the viral protease yield mature proteins. The protease is released by autocatalytic cleavage. The polyprotein is cleaved during and after budding, this process is termed maturation. Proteolytic cleavage of p66 RT removes the RNase H domain to yield the p51 RT subunit. Nucleocapsid protein p7 might be further cleaved after virus entry.</text>
</comment>
<comment type="miscellaneous">
    <molecule>Reverse transcriptase/ribonuclease H</molecule>
    <text evidence="1">Error-prone enzyme that lacks a proof-reading function. High mutations rate is a direct consequence of this characteristic. RT also displays frequent template switching leading to high recombination rate. Recombination mostly occurs between homologous regions of the two copackaged RNA genomes. If these two RNA molecules derive from different viral strains, reverse transcription will give rise to highly recombinated proviral DNAs.</text>
</comment>
<comment type="miscellaneous">
    <text>This isolate is from a Gambian case of 'neuro-AIDS'.</text>
</comment>
<comment type="miscellaneous">
    <molecule>Isoform Gag-Pol polyprotein</molecule>
    <text>Produced by -1 ribosomal frameshifting.</text>
</comment>
<proteinExistence type="inferred from homology"/>